<comment type="function">
    <text evidence="1 5">Regulator of microtubule dynamics that plays a key role in myelination by promoting elongation of the myelin sheath (PubMed:19606501). Acts as a microtubule nucleation factor in oligodendrocytes: specifically localizes to the postsynaptic Golgi apparatus region, also named Golgi outpost, and promotes microtubule nucleation, an important step for elongation of the myelin sheath (By similarity). Required for both uniform polarized growth of distal microtubules as well as directing the branching of proximal processes (By similarity). Shows magnesium-dependent GTPase activity; the role of the GTPase activity is unclear (By similarity). In addition to microtubule nucleation activity, also involved in microtubule bundling and stabilization of existing microtubules, thereby maintaining the integrity of the microtubule network (By similarity). Regulates microtubule dynamics by promoting tubulin acetylation: acts by inhibiting the tubulin deacetylase activity of HDAC6 (By similarity). Also regulates cell migration: phosphorylation by ROCK1 inhibits interaction with HDAC6, resulting in decreased acetylation of tubulin and increased cell motility (By similarity). Plays a role in cell proliferation by regulating the G1/S-phase transition (By similarity). Involved in astral microtubule organization and mitotic spindle orientation during early stage of mitosis; this process is regulated by phosphorylation by LIMK2 (By similarity).</text>
</comment>
<comment type="catalytic activity">
    <reaction evidence="1">
        <text>GTP + H2O = GDP + phosphate + H(+)</text>
        <dbReference type="Rhea" id="RHEA:19669"/>
        <dbReference type="ChEBI" id="CHEBI:15377"/>
        <dbReference type="ChEBI" id="CHEBI:15378"/>
        <dbReference type="ChEBI" id="CHEBI:37565"/>
        <dbReference type="ChEBI" id="CHEBI:43474"/>
        <dbReference type="ChEBI" id="CHEBI:58189"/>
    </reaction>
    <physiologicalReaction direction="left-to-right" evidence="1">
        <dbReference type="Rhea" id="RHEA:19670"/>
    </physiologicalReaction>
</comment>
<comment type="cofactor">
    <cofactor evidence="1">
        <name>Mg(2+)</name>
        <dbReference type="ChEBI" id="CHEBI:18420"/>
    </cofactor>
</comment>
<comment type="subunit">
    <text evidence="1 2">Homodimer. Binds tubulin; binding is inhibited by GTP (By similarity). Interacts with MAPK1. Interacts with GAPDH; the interaction is direct (By similarity). Interacts with LIMK1 (via the PDZ domain); the interaction is direct. Interacts with LIMK2. Interacts with HDAC6; thereby inhibiting the tubulin deacetylase activity of HDAC6. Interacts with aggregated SNCA; may have a pro-aggregatory role in synucleinopathies. Interacts with DYNLL1 (By similarity). Interacts (via C-terminus) with S100A2, S100A6 and S100B; these interactions inhibit TPPP dimerization (By similarity).</text>
</comment>
<comment type="subcellular location">
    <subcellularLocation>
        <location evidence="6">Golgi outpost</location>
    </subcellularLocation>
    <subcellularLocation>
        <location evidence="6">Cytoplasm</location>
        <location evidence="6">Cytoskeleton</location>
        <location evidence="6">Microtubule organizing center</location>
    </subcellularLocation>
    <subcellularLocation>
        <location evidence="1">Cytoplasm</location>
        <location evidence="1">Cytoskeleton</location>
    </subcellularLocation>
    <subcellularLocation>
        <location evidence="1">Nucleus</location>
    </subcellularLocation>
    <subcellularLocation>
        <location evidence="1">Cytoplasm</location>
        <location evidence="1">Cytoskeleton</location>
        <location evidence="1">Spindle</location>
    </subcellularLocation>
    <text evidence="1 6">Specifically localizes to the postsynaptic Golgi apparatus region, also named Golgi outpost, which shapes dendrite morphology by functioning as sites of acentrosomal microtubule nucleation (PubMed:31522887). Mainly localizes to the cytoskeleton. Also found in the nucleus; however, nuclear localization is unclear and requires additional evidences. Localizes to glial Lewy bodies in the brains of individuals with synucleinopathies. During mitosis, colocalizes with LIMK2 at the mitotic spindle (By similarity).</text>
</comment>
<comment type="tissue specificity">
    <text evidence="7">Predominantly expressed in mature oligodendrocytes.</text>
</comment>
<comment type="induction">
    <text evidence="5">Strongly up-regulated during the differentiation of primary oligodendrocyte cells.</text>
</comment>
<comment type="domain">
    <text evidence="1">Most of the protein is composed of disordered regions. Zinc-binding induces structural rearrangement by promoting molten globule state formation.</text>
</comment>
<comment type="PTM">
    <text evidence="1">Phosphorylated by LIMK1 on serine residues; phosphorylation may alter the tubulin polymerization activity. Phosphorylation by LIMK2, but not LIMK1, regulates astral microtubule organization at early stage of mitosis. Phosphorylation by ROCK1 at Ser-31, Ser-106 and Ser-158 inhibits interaction with HDAC6, resulting in decreased acetylation of tubulin, increased cell motility and entry into S-phase. Phosphorylation by CDK1 inhibits the microtubule polymerizing activity.</text>
</comment>
<comment type="PTM">
    <text evidence="1">Degraded by the proteasome; zinc-binding inhibits degradation by the proteasome.</text>
</comment>
<comment type="similarity">
    <text evidence="10">Belongs to the TPPP family.</text>
</comment>
<comment type="sequence caution" evidence="10">
    <conflict type="erroneous gene model prediction">
        <sequence resource="EMBL" id="AABR07071856"/>
    </conflict>
</comment>
<feature type="chain" id="PRO_0000448593" description="Tubulin polymerization-promoting protein">
    <location>
        <begin position="1"/>
        <end position="218"/>
    </location>
</feature>
<feature type="region of interest" description="Disordered" evidence="4">
    <location>
        <begin position="1"/>
        <end position="45"/>
    </location>
</feature>
<feature type="region of interest" description="Mediates interaction with LIMK1" evidence="1">
    <location>
        <begin position="2"/>
        <end position="115"/>
    </location>
</feature>
<feature type="region of interest" description="Disordered" evidence="4">
    <location>
        <begin position="165"/>
        <end position="192"/>
    </location>
</feature>
<feature type="compositionally biased region" description="Low complexity" evidence="4">
    <location>
        <begin position="33"/>
        <end position="45"/>
    </location>
</feature>
<feature type="compositionally biased region" description="Basic and acidic residues" evidence="4">
    <location>
        <begin position="174"/>
        <end position="183"/>
    </location>
</feature>
<feature type="binding site" evidence="1">
    <location>
        <position position="60"/>
    </location>
    <ligand>
        <name>Zn(2+)</name>
        <dbReference type="ChEBI" id="CHEBI:29105"/>
    </ligand>
</feature>
<feature type="binding site" evidence="1">
    <location>
        <position position="71"/>
    </location>
    <ligand>
        <name>Zn(2+)</name>
        <dbReference type="ChEBI" id="CHEBI:29105"/>
    </ligand>
</feature>
<feature type="binding site" evidence="1">
    <location>
        <position position="79"/>
    </location>
    <ligand>
        <name>Zn(2+)</name>
        <dbReference type="ChEBI" id="CHEBI:29105"/>
    </ligand>
</feature>
<feature type="binding site" evidence="1">
    <location>
        <position position="82"/>
    </location>
    <ligand>
        <name>Zn(2+)</name>
        <dbReference type="ChEBI" id="CHEBI:29105"/>
    </ligand>
</feature>
<feature type="modified residue" description="Phosphothreonine" evidence="1">
    <location>
        <position position="15"/>
    </location>
</feature>
<feature type="modified residue" description="Phosphoserine" evidence="1">
    <location>
        <position position="19"/>
    </location>
</feature>
<feature type="modified residue" description="Phosphoserine" evidence="1">
    <location>
        <position position="31"/>
    </location>
</feature>
<feature type="modified residue" description="Phosphoserine" evidence="1">
    <location>
        <position position="34"/>
    </location>
</feature>
<feature type="modified residue" description="Phosphothreonine" evidence="1">
    <location>
        <position position="91"/>
    </location>
</feature>
<feature type="modified residue" description="Phosphoserine" evidence="1">
    <location>
        <position position="106"/>
    </location>
</feature>
<feature type="modified residue" description="Phosphoserine" evidence="1">
    <location>
        <position position="158"/>
    </location>
</feature>
<feature type="modified residue" description="Phosphoserine" evidence="1">
    <location>
        <position position="159"/>
    </location>
</feature>
<feature type="glycosylation site" description="O-linked (GlcNAc) serine" evidence="3">
    <location>
        <position position="151"/>
    </location>
</feature>
<keyword id="KW-0131">Cell cycle</keyword>
<keyword id="KW-0132">Cell division</keyword>
<keyword id="KW-0963">Cytoplasm</keyword>
<keyword id="KW-0206">Cytoskeleton</keyword>
<keyword id="KW-0325">Glycoprotein</keyword>
<keyword id="KW-0333">Golgi apparatus</keyword>
<keyword id="KW-0378">Hydrolase</keyword>
<keyword id="KW-0460">Magnesium</keyword>
<keyword id="KW-0479">Metal-binding</keyword>
<keyword id="KW-0498">Mitosis</keyword>
<keyword id="KW-0539">Nucleus</keyword>
<keyword id="KW-0597">Phosphoprotein</keyword>
<keyword id="KW-1185">Reference proteome</keyword>
<keyword id="KW-0862">Zinc</keyword>
<sequence>MADSKAKPTKAANKTPPKSPGDPAKAAKRLSLESEGANEGAAAAPELSALEEAFRRFAVHGDTRATGKEMHGKNWSKLCKDCHVIDGKNVTVTDVDIVFSKIKGKSCRTITFEQFQEALEELAKKRFKDKSSEEAVREVHRLIEGRAPVISGVTKAVSSPTVSRLTDTSKFTGSHKERFDQSGKGKGKAGRVDLVDESGYVPGYKHAGTYDQKVQGGK</sequence>
<dbReference type="EC" id="3.6.5.-" evidence="1"/>
<dbReference type="EMBL" id="AABR07071856">
    <property type="status" value="NOT_ANNOTATED_CDS"/>
    <property type="molecule type" value="Genomic_DNA"/>
</dbReference>
<dbReference type="EMBL" id="CH474002">
    <property type="protein sequence ID" value="EDL87672.1"/>
    <property type="molecule type" value="Genomic_DNA"/>
</dbReference>
<dbReference type="RefSeq" id="NP_001101931.1">
    <property type="nucleotide sequence ID" value="NM_001108461.1"/>
</dbReference>
<dbReference type="RefSeq" id="XP_006227855.1">
    <property type="nucleotide sequence ID" value="XM_006227793.4"/>
</dbReference>
<dbReference type="RefSeq" id="XP_006227856.1">
    <property type="nucleotide sequence ID" value="XM_006227794.4"/>
</dbReference>
<dbReference type="SMR" id="D3ZQL7"/>
<dbReference type="FunCoup" id="D3ZQL7">
    <property type="interactions" value="619"/>
</dbReference>
<dbReference type="STRING" id="10116.ENSRNOP00000072201"/>
<dbReference type="GlyCosmos" id="D3ZQL7">
    <property type="glycosylation" value="1 site, No reported glycans"/>
</dbReference>
<dbReference type="GlyGen" id="D3ZQL7">
    <property type="glycosylation" value="1 site"/>
</dbReference>
<dbReference type="iPTMnet" id="D3ZQL7"/>
<dbReference type="PhosphoSitePlus" id="D3ZQL7"/>
<dbReference type="jPOST" id="D3ZQL7"/>
<dbReference type="PaxDb" id="10116-ENSRNOP00000034617"/>
<dbReference type="PeptideAtlas" id="D3ZQL7"/>
<dbReference type="Ensembl" id="ENSRNOT00000039166.7">
    <property type="protein sequence ID" value="ENSRNOP00000034617.4"/>
    <property type="gene ID" value="ENSRNOG00000028261.7"/>
</dbReference>
<dbReference type="GeneID" id="361466"/>
<dbReference type="KEGG" id="rno:361466"/>
<dbReference type="UCSC" id="RGD:1310121">
    <property type="organism name" value="rat"/>
</dbReference>
<dbReference type="AGR" id="RGD:1310121"/>
<dbReference type="CTD" id="11076"/>
<dbReference type="RGD" id="1310121">
    <property type="gene designation" value="Tppp"/>
</dbReference>
<dbReference type="eggNOG" id="KOG4070">
    <property type="taxonomic scope" value="Eukaryota"/>
</dbReference>
<dbReference type="GeneTree" id="ENSGT00940000153875"/>
<dbReference type="HOGENOM" id="CLU_091734_0_0_1"/>
<dbReference type="InParanoid" id="D3ZQL7"/>
<dbReference type="OrthoDB" id="71305at9989"/>
<dbReference type="PhylomeDB" id="D3ZQL7"/>
<dbReference type="TreeFam" id="TF314440"/>
<dbReference type="PRO" id="PR:D3ZQL7"/>
<dbReference type="Proteomes" id="UP000002494">
    <property type="component" value="Chromosome 1"/>
</dbReference>
<dbReference type="Proteomes" id="UP000234681">
    <property type="component" value="Chromosome 1"/>
</dbReference>
<dbReference type="Bgee" id="ENSRNOG00000028261">
    <property type="expression patterns" value="Expressed in frontal cortex and 18 other cell types or tissues"/>
</dbReference>
<dbReference type="ExpressionAtlas" id="D3ZQL7">
    <property type="expression patterns" value="baseline"/>
</dbReference>
<dbReference type="GO" id="GO:0005737">
    <property type="term" value="C:cytoplasm"/>
    <property type="evidence" value="ECO:0000266"/>
    <property type="project" value="RGD"/>
</dbReference>
<dbReference type="GO" id="GO:0005829">
    <property type="term" value="C:cytosol"/>
    <property type="evidence" value="ECO:0007669"/>
    <property type="project" value="Ensembl"/>
</dbReference>
<dbReference type="GO" id="GO:0005794">
    <property type="term" value="C:Golgi apparatus"/>
    <property type="evidence" value="ECO:0000266"/>
    <property type="project" value="RGD"/>
</dbReference>
<dbReference type="GO" id="GO:0005874">
    <property type="term" value="C:microtubule"/>
    <property type="evidence" value="ECO:0000266"/>
    <property type="project" value="RGD"/>
</dbReference>
<dbReference type="GO" id="GO:0097427">
    <property type="term" value="C:microtubule bundle"/>
    <property type="evidence" value="ECO:0000266"/>
    <property type="project" value="RGD"/>
</dbReference>
<dbReference type="GO" id="GO:0005815">
    <property type="term" value="C:microtubule organizing center"/>
    <property type="evidence" value="ECO:0007669"/>
    <property type="project" value="UniProtKB-SubCell"/>
</dbReference>
<dbReference type="GO" id="GO:0005739">
    <property type="term" value="C:mitochondrion"/>
    <property type="evidence" value="ECO:0007669"/>
    <property type="project" value="Ensembl"/>
</dbReference>
<dbReference type="GO" id="GO:0072686">
    <property type="term" value="C:mitotic spindle"/>
    <property type="evidence" value="ECO:0000250"/>
    <property type="project" value="UniProtKB"/>
</dbReference>
<dbReference type="GO" id="GO:0005634">
    <property type="term" value="C:nucleus"/>
    <property type="evidence" value="ECO:0000266"/>
    <property type="project" value="RGD"/>
</dbReference>
<dbReference type="GO" id="GO:0048471">
    <property type="term" value="C:perinuclear region of cytoplasm"/>
    <property type="evidence" value="ECO:0000250"/>
    <property type="project" value="BHF-UCL"/>
</dbReference>
<dbReference type="GO" id="GO:0150051">
    <property type="term" value="C:postsynaptic Golgi apparatus"/>
    <property type="evidence" value="ECO:0000314"/>
    <property type="project" value="UniProtKB"/>
</dbReference>
<dbReference type="GO" id="GO:0003924">
    <property type="term" value="F:GTPase activity"/>
    <property type="evidence" value="ECO:0000250"/>
    <property type="project" value="UniProtKB"/>
</dbReference>
<dbReference type="GO" id="GO:0000287">
    <property type="term" value="F:magnesium ion binding"/>
    <property type="evidence" value="ECO:0000250"/>
    <property type="project" value="UniProtKB"/>
</dbReference>
<dbReference type="GO" id="GO:0008017">
    <property type="term" value="F:microtubule binding"/>
    <property type="evidence" value="ECO:0000250"/>
    <property type="project" value="BHF-UCL"/>
</dbReference>
<dbReference type="GO" id="GO:0140490">
    <property type="term" value="F:microtubule nucleator activity"/>
    <property type="evidence" value="ECO:0000266"/>
    <property type="project" value="RGD"/>
</dbReference>
<dbReference type="GO" id="GO:0046983">
    <property type="term" value="F:protein dimerization activity"/>
    <property type="evidence" value="ECO:0000266"/>
    <property type="project" value="RGD"/>
</dbReference>
<dbReference type="GO" id="GO:0042803">
    <property type="term" value="F:protein homodimerization activity"/>
    <property type="evidence" value="ECO:0000250"/>
    <property type="project" value="UniProtKB"/>
</dbReference>
<dbReference type="GO" id="GO:0015631">
    <property type="term" value="F:tubulin binding"/>
    <property type="evidence" value="ECO:0000250"/>
    <property type="project" value="BHF-UCL"/>
</dbReference>
<dbReference type="GO" id="GO:0030953">
    <property type="term" value="P:astral microtubule organization"/>
    <property type="evidence" value="ECO:0000250"/>
    <property type="project" value="UniProtKB"/>
</dbReference>
<dbReference type="GO" id="GO:0051301">
    <property type="term" value="P:cell division"/>
    <property type="evidence" value="ECO:0007669"/>
    <property type="project" value="UniProtKB-KW"/>
</dbReference>
<dbReference type="GO" id="GO:0001578">
    <property type="term" value="P:microtubule bundle formation"/>
    <property type="evidence" value="ECO:0000250"/>
    <property type="project" value="UniProtKB"/>
</dbReference>
<dbReference type="GO" id="GO:0051418">
    <property type="term" value="P:microtubule nucleation by microtubule organizing center"/>
    <property type="evidence" value="ECO:0000250"/>
    <property type="project" value="UniProtKB"/>
</dbReference>
<dbReference type="GO" id="GO:0046785">
    <property type="term" value="P:microtubule polymerization"/>
    <property type="evidence" value="ECO:0000250"/>
    <property type="project" value="BHF-UCL"/>
</dbReference>
<dbReference type="GO" id="GO:0032288">
    <property type="term" value="P:myelin assembly"/>
    <property type="evidence" value="ECO:0000315"/>
    <property type="project" value="UniProtKB"/>
</dbReference>
<dbReference type="GO" id="GO:1904428">
    <property type="term" value="P:negative regulation of tubulin deacetylation"/>
    <property type="evidence" value="ECO:0000250"/>
    <property type="project" value="UniProtKB"/>
</dbReference>
<dbReference type="GO" id="GO:0014003">
    <property type="term" value="P:oligodendrocyte development"/>
    <property type="evidence" value="ECO:0000250"/>
    <property type="project" value="UniProtKB"/>
</dbReference>
<dbReference type="GO" id="GO:0048709">
    <property type="term" value="P:oligodendrocyte differentiation"/>
    <property type="evidence" value="ECO:0000250"/>
    <property type="project" value="UniProtKB"/>
</dbReference>
<dbReference type="GO" id="GO:0031643">
    <property type="term" value="P:positive regulation of myelination"/>
    <property type="evidence" value="ECO:0000315"/>
    <property type="project" value="UniProtKB"/>
</dbReference>
<dbReference type="GO" id="GO:0032273">
    <property type="term" value="P:positive regulation of protein polymerization"/>
    <property type="evidence" value="ECO:0000250"/>
    <property type="project" value="BHF-UCL"/>
</dbReference>
<dbReference type="GO" id="GO:0031334">
    <property type="term" value="P:positive regulation of protein-containing complex assembly"/>
    <property type="evidence" value="ECO:0000250"/>
    <property type="project" value="BHF-UCL"/>
</dbReference>
<dbReference type="GO" id="GO:0070507">
    <property type="term" value="P:regulation of microtubule cytoskeleton organization"/>
    <property type="evidence" value="ECO:0000250"/>
    <property type="project" value="UniProtKB"/>
</dbReference>
<dbReference type="FunFam" id="1.10.238.10:FF:000057">
    <property type="entry name" value="Tubulin polymerization-promoting protein family member 3"/>
    <property type="match status" value="1"/>
</dbReference>
<dbReference type="Gene3D" id="1.10.238.10">
    <property type="entry name" value="EF-hand"/>
    <property type="match status" value="1"/>
</dbReference>
<dbReference type="InterPro" id="IPR011992">
    <property type="entry name" value="EF-hand-dom_pair"/>
</dbReference>
<dbReference type="InterPro" id="IPR008907">
    <property type="entry name" value="TPP/p25"/>
</dbReference>
<dbReference type="PANTHER" id="PTHR12932">
    <property type="entry name" value="P25 ALPHA-RELATED"/>
    <property type="match status" value="1"/>
</dbReference>
<dbReference type="PANTHER" id="PTHR12932:SF18">
    <property type="entry name" value="TUBULIN POLYMERIZATION-PROMOTING PROTEIN"/>
    <property type="match status" value="1"/>
</dbReference>
<dbReference type="Pfam" id="PF05517">
    <property type="entry name" value="p25-alpha"/>
    <property type="match status" value="1"/>
</dbReference>
<dbReference type="SUPFAM" id="SSF47473">
    <property type="entry name" value="EF-hand"/>
    <property type="match status" value="1"/>
</dbReference>
<proteinExistence type="evidence at protein level"/>
<evidence type="ECO:0000250" key="1">
    <source>
        <dbReference type="UniProtKB" id="O94811"/>
    </source>
</evidence>
<evidence type="ECO:0000250" key="2">
    <source>
        <dbReference type="UniProtKB" id="Q27957"/>
    </source>
</evidence>
<evidence type="ECO:0000250" key="3">
    <source>
        <dbReference type="UniProtKB" id="Q7TQD2"/>
    </source>
</evidence>
<evidence type="ECO:0000256" key="4">
    <source>
        <dbReference type="SAM" id="MobiDB-lite"/>
    </source>
</evidence>
<evidence type="ECO:0000269" key="5">
    <source>
    </source>
</evidence>
<evidence type="ECO:0000269" key="6">
    <source>
    </source>
</evidence>
<evidence type="ECO:0000269" key="7">
    <source>
    </source>
</evidence>
<evidence type="ECO:0000303" key="8">
    <source>
    </source>
</evidence>
<evidence type="ECO:0000303" key="9">
    <source>
    </source>
</evidence>
<evidence type="ECO:0000305" key="10"/>
<evidence type="ECO:0000312" key="11">
    <source>
        <dbReference type="RGD" id="1310121"/>
    </source>
</evidence>
<accession>D3ZQL7</accession>
<accession>A0A0G2K2D6</accession>
<protein>
    <recommendedName>
        <fullName evidence="8">Tubulin polymerization-promoting protein</fullName>
        <shortName evidence="8">TPPP</shortName>
        <ecNumber evidence="1">3.6.5.-</ecNumber>
    </recommendedName>
    <alternativeName>
        <fullName evidence="9">25 kDa brain-specific protein</fullName>
    </alternativeName>
    <alternativeName>
        <fullName evidence="9">TPPP/p25</fullName>
    </alternativeName>
    <alternativeName>
        <fullName evidence="9">p25-alpha</fullName>
    </alternativeName>
</protein>
<gene>
    <name evidence="8 11" type="primary">Tppp</name>
</gene>
<organism>
    <name type="scientific">Rattus norvegicus</name>
    <name type="common">Rat</name>
    <dbReference type="NCBI Taxonomy" id="10116"/>
    <lineage>
        <taxon>Eukaryota</taxon>
        <taxon>Metazoa</taxon>
        <taxon>Chordata</taxon>
        <taxon>Craniata</taxon>
        <taxon>Vertebrata</taxon>
        <taxon>Euteleostomi</taxon>
        <taxon>Mammalia</taxon>
        <taxon>Eutheria</taxon>
        <taxon>Euarchontoglires</taxon>
        <taxon>Glires</taxon>
        <taxon>Rodentia</taxon>
        <taxon>Myomorpha</taxon>
        <taxon>Muroidea</taxon>
        <taxon>Muridae</taxon>
        <taxon>Murinae</taxon>
        <taxon>Rattus</taxon>
    </lineage>
</organism>
<name>TPPP_RAT</name>
<reference key="1">
    <citation type="journal article" date="2004" name="Nature">
        <title>Genome sequence of the Brown Norway rat yields insights into mammalian evolution.</title>
        <authorList>
            <person name="Gibbs R.A."/>
            <person name="Weinstock G.M."/>
            <person name="Metzker M.L."/>
            <person name="Muzny D.M."/>
            <person name="Sodergren E.J."/>
            <person name="Scherer S."/>
            <person name="Scott G."/>
            <person name="Steffen D."/>
            <person name="Worley K.C."/>
            <person name="Burch P.E."/>
            <person name="Okwuonu G."/>
            <person name="Hines S."/>
            <person name="Lewis L."/>
            <person name="Deramo C."/>
            <person name="Delgado O."/>
            <person name="Dugan-Rocha S."/>
            <person name="Miner G."/>
            <person name="Morgan M."/>
            <person name="Hawes A."/>
            <person name="Gill R."/>
            <person name="Holt R.A."/>
            <person name="Adams M.D."/>
            <person name="Amanatides P.G."/>
            <person name="Baden-Tillson H."/>
            <person name="Barnstead M."/>
            <person name="Chin S."/>
            <person name="Evans C.A."/>
            <person name="Ferriera S."/>
            <person name="Fosler C."/>
            <person name="Glodek A."/>
            <person name="Gu Z."/>
            <person name="Jennings D."/>
            <person name="Kraft C.L."/>
            <person name="Nguyen T."/>
            <person name="Pfannkoch C.M."/>
            <person name="Sitter C."/>
            <person name="Sutton G.G."/>
            <person name="Venter J.C."/>
            <person name="Woodage T."/>
            <person name="Smith D."/>
            <person name="Lee H.-M."/>
            <person name="Gustafson E."/>
            <person name="Cahill P."/>
            <person name="Kana A."/>
            <person name="Doucette-Stamm L."/>
            <person name="Weinstock K."/>
            <person name="Fechtel K."/>
            <person name="Weiss R.B."/>
            <person name="Dunn D.M."/>
            <person name="Green E.D."/>
            <person name="Blakesley R.W."/>
            <person name="Bouffard G.G."/>
            <person name="De Jong P.J."/>
            <person name="Osoegawa K."/>
            <person name="Zhu B."/>
            <person name="Marra M."/>
            <person name="Schein J."/>
            <person name="Bosdet I."/>
            <person name="Fjell C."/>
            <person name="Jones S."/>
            <person name="Krzywinski M."/>
            <person name="Mathewson C."/>
            <person name="Siddiqui A."/>
            <person name="Wye N."/>
            <person name="McPherson J."/>
            <person name="Zhao S."/>
            <person name="Fraser C.M."/>
            <person name="Shetty J."/>
            <person name="Shatsman S."/>
            <person name="Geer K."/>
            <person name="Chen Y."/>
            <person name="Abramzon S."/>
            <person name="Nierman W.C."/>
            <person name="Havlak P.H."/>
            <person name="Chen R."/>
            <person name="Durbin K.J."/>
            <person name="Egan A."/>
            <person name="Ren Y."/>
            <person name="Song X.-Z."/>
            <person name="Li B."/>
            <person name="Liu Y."/>
            <person name="Qin X."/>
            <person name="Cawley S."/>
            <person name="Cooney A.J."/>
            <person name="D'Souza L.M."/>
            <person name="Martin K."/>
            <person name="Wu J.Q."/>
            <person name="Gonzalez-Garay M.L."/>
            <person name="Jackson A.R."/>
            <person name="Kalafus K.J."/>
            <person name="McLeod M.P."/>
            <person name="Milosavljevic A."/>
            <person name="Virk D."/>
            <person name="Volkov A."/>
            <person name="Wheeler D.A."/>
            <person name="Zhang Z."/>
            <person name="Bailey J.A."/>
            <person name="Eichler E.E."/>
            <person name="Tuzun E."/>
            <person name="Birney E."/>
            <person name="Mongin E."/>
            <person name="Ureta-Vidal A."/>
            <person name="Woodwark C."/>
            <person name="Zdobnov E."/>
            <person name="Bork P."/>
            <person name="Suyama M."/>
            <person name="Torrents D."/>
            <person name="Alexandersson M."/>
            <person name="Trask B.J."/>
            <person name="Young J.M."/>
            <person name="Huang H."/>
            <person name="Wang H."/>
            <person name="Xing H."/>
            <person name="Daniels S."/>
            <person name="Gietzen D."/>
            <person name="Schmidt J."/>
            <person name="Stevens K."/>
            <person name="Vitt U."/>
            <person name="Wingrove J."/>
            <person name="Camara F."/>
            <person name="Mar Alba M."/>
            <person name="Abril J.F."/>
            <person name="Guigo R."/>
            <person name="Smit A."/>
            <person name="Dubchak I."/>
            <person name="Rubin E.M."/>
            <person name="Couronne O."/>
            <person name="Poliakov A."/>
            <person name="Huebner N."/>
            <person name="Ganten D."/>
            <person name="Goesele C."/>
            <person name="Hummel O."/>
            <person name="Kreitler T."/>
            <person name="Lee Y.-A."/>
            <person name="Monti J."/>
            <person name="Schulz H."/>
            <person name="Zimdahl H."/>
            <person name="Himmelbauer H."/>
            <person name="Lehrach H."/>
            <person name="Jacob H.J."/>
            <person name="Bromberg S."/>
            <person name="Gullings-Handley J."/>
            <person name="Jensen-Seaman M.I."/>
            <person name="Kwitek A.E."/>
            <person name="Lazar J."/>
            <person name="Pasko D."/>
            <person name="Tonellato P.J."/>
            <person name="Twigger S."/>
            <person name="Ponting C.P."/>
            <person name="Duarte J.M."/>
            <person name="Rice S."/>
            <person name="Goodstadt L."/>
            <person name="Beatson S.A."/>
            <person name="Emes R.D."/>
            <person name="Winter E.E."/>
            <person name="Webber C."/>
            <person name="Brandt P."/>
            <person name="Nyakatura G."/>
            <person name="Adetobi M."/>
            <person name="Chiaromonte F."/>
            <person name="Elnitski L."/>
            <person name="Eswara P."/>
            <person name="Hardison R.C."/>
            <person name="Hou M."/>
            <person name="Kolbe D."/>
            <person name="Makova K."/>
            <person name="Miller W."/>
            <person name="Nekrutenko A."/>
            <person name="Riemer C."/>
            <person name="Schwartz S."/>
            <person name="Taylor J."/>
            <person name="Yang S."/>
            <person name="Zhang Y."/>
            <person name="Lindpaintner K."/>
            <person name="Andrews T.D."/>
            <person name="Caccamo M."/>
            <person name="Clamp M."/>
            <person name="Clarke L."/>
            <person name="Curwen V."/>
            <person name="Durbin R.M."/>
            <person name="Eyras E."/>
            <person name="Searle S.M."/>
            <person name="Cooper G.M."/>
            <person name="Batzoglou S."/>
            <person name="Brudno M."/>
            <person name="Sidow A."/>
            <person name="Stone E.A."/>
            <person name="Payseur B.A."/>
            <person name="Bourque G."/>
            <person name="Lopez-Otin C."/>
            <person name="Puente X.S."/>
            <person name="Chakrabarti K."/>
            <person name="Chatterji S."/>
            <person name="Dewey C."/>
            <person name="Pachter L."/>
            <person name="Bray N."/>
            <person name="Yap V.B."/>
            <person name="Caspi A."/>
            <person name="Tesler G."/>
            <person name="Pevzner P.A."/>
            <person name="Haussler D."/>
            <person name="Roskin K.M."/>
            <person name="Baertsch R."/>
            <person name="Clawson H."/>
            <person name="Furey T.S."/>
            <person name="Hinrichs A.S."/>
            <person name="Karolchik D."/>
            <person name="Kent W.J."/>
            <person name="Rosenbloom K.R."/>
            <person name="Trumbower H."/>
            <person name="Weirauch M."/>
            <person name="Cooper D.N."/>
            <person name="Stenson P.D."/>
            <person name="Ma B."/>
            <person name="Brent M."/>
            <person name="Arumugam M."/>
            <person name="Shteynberg D."/>
            <person name="Copley R.R."/>
            <person name="Taylor M.S."/>
            <person name="Riethman H."/>
            <person name="Mudunuri U."/>
            <person name="Peterson J."/>
            <person name="Guyer M."/>
            <person name="Felsenfeld A."/>
            <person name="Old S."/>
            <person name="Mockrin S."/>
            <person name="Collins F.S."/>
        </authorList>
    </citation>
    <scope>NUCLEOTIDE SEQUENCE [LARGE SCALE GENOMIC DNA]</scope>
    <source>
        <strain>Brown Norway</strain>
    </source>
</reference>
<reference key="2">
    <citation type="submission" date="2005-09" db="EMBL/GenBank/DDBJ databases">
        <authorList>
            <person name="Mural R.J."/>
            <person name="Adams M.D."/>
            <person name="Myers E.W."/>
            <person name="Smith H.O."/>
            <person name="Venter J.C."/>
        </authorList>
    </citation>
    <scope>NUCLEOTIDE SEQUENCE [LARGE SCALE GENOMIC DNA]</scope>
    <source>
        <strain>Brown Norway</strain>
    </source>
</reference>
<reference key="3">
    <citation type="journal article" date="2012" name="Nat. Commun.">
        <title>Quantitative maps of protein phosphorylation sites across 14 different rat organs and tissues.</title>
        <authorList>
            <person name="Lundby A."/>
            <person name="Secher A."/>
            <person name="Lage K."/>
            <person name="Nordsborg N.B."/>
            <person name="Dmytriyev A."/>
            <person name="Lundby C."/>
            <person name="Olsen J.V."/>
        </authorList>
    </citation>
    <scope>IDENTIFICATION BY MASS SPECTROMETRY [LARGE SCALE ANALYSIS]</scope>
</reference>
<reference key="4">
    <citation type="journal article" date="1993" name="J. Neurochem.">
        <title>A brain-specific protein p25 is localized and associated with oligodendrocytes, neuropil, and fiber-like structures of the CA3 hippocampal region in the rat brain.</title>
        <authorList>
            <person name="Takahashi M."/>
            <person name="Tomizawa K."/>
            <person name="Fujita S.C."/>
            <person name="Sato K."/>
            <person name="Uchida T."/>
            <person name="Imahori K."/>
        </authorList>
    </citation>
    <scope>TISSUE SPECIFICITY</scope>
</reference>
<reference key="5">
    <citation type="journal article" date="2010" name="Glia">
        <title>Tubulin polymerization-promoting protein (TPPP/p25) is critical for oligodendrocyte differentiation.</title>
        <authorList>
            <person name="Lehotzky A."/>
            <person name="Lau P."/>
            <person name="Tokesi N."/>
            <person name="Muja N."/>
            <person name="Hudson L.D."/>
            <person name="Ovadi J."/>
        </authorList>
    </citation>
    <scope>FUNCTION</scope>
    <scope>INDUCTION</scope>
</reference>
<reference key="6">
    <citation type="journal article" date="2019" name="Cell">
        <title>The Golgi outpost protein TPPP nucleates microtubules and is critical for myelination.</title>
        <authorList>
            <person name="Fu M.M."/>
            <person name="McAlear T.S."/>
            <person name="Nguyen H."/>
            <person name="Oses-Prieto J.A."/>
            <person name="Valenzuela A."/>
            <person name="Shi R.D."/>
            <person name="Perrino J.J."/>
            <person name="Huang T.T."/>
            <person name="Burlingame A.L."/>
            <person name="Bechstedt S."/>
            <person name="Barres B.A."/>
        </authorList>
    </citation>
    <scope>SUBCELLULAR LOCATION</scope>
</reference>